<accession>P0A6R4</accession>
<accession>P11028</accession>
<accession>P37404</accession>
<sequence length="98" mass="11240">MFEQRVNSDVLTVSTVNSQDQVTQKPLRDSVKQALKNYFAQLNGQDVNDLYELVLAEVEQPLLDMVMQYTRGNQTRAALMMGINRGTLRKKLKKYGMN</sequence>
<name>FIS_ECOL6</name>
<proteinExistence type="inferred from homology"/>
<comment type="function">
    <text evidence="1">Activates ribosomal RNA transcription. Plays a direct role in upstream activation of rRNA promoters.</text>
</comment>
<comment type="subunit">
    <text evidence="1">Homodimer.</text>
</comment>
<comment type="similarity">
    <text evidence="1">Belongs to the transcriptional regulatory Fis family.</text>
</comment>
<dbReference type="EMBL" id="AE014075">
    <property type="protein sequence ID" value="AAN82467.1"/>
    <property type="molecule type" value="Genomic_DNA"/>
</dbReference>
<dbReference type="RefSeq" id="WP_000462905.1">
    <property type="nucleotide sequence ID" value="NZ_CP051263.1"/>
</dbReference>
<dbReference type="SMR" id="P0A6R4"/>
<dbReference type="STRING" id="199310.c4027"/>
<dbReference type="GeneID" id="98390389"/>
<dbReference type="KEGG" id="ecc:c4027"/>
<dbReference type="eggNOG" id="COG2901">
    <property type="taxonomic scope" value="Bacteria"/>
</dbReference>
<dbReference type="HOGENOM" id="CLU_158040_3_0_6"/>
<dbReference type="BioCyc" id="ECOL199310:C4027-MONOMER"/>
<dbReference type="Proteomes" id="UP000001410">
    <property type="component" value="Chromosome"/>
</dbReference>
<dbReference type="GO" id="GO:0003700">
    <property type="term" value="F:DNA-binding transcription factor activity"/>
    <property type="evidence" value="ECO:0007669"/>
    <property type="project" value="UniProtKB-UniRule"/>
</dbReference>
<dbReference type="GO" id="GO:0043565">
    <property type="term" value="F:sequence-specific DNA binding"/>
    <property type="evidence" value="ECO:0007669"/>
    <property type="project" value="InterPro"/>
</dbReference>
<dbReference type="FunFam" id="1.10.10.60:FF:000006">
    <property type="entry name" value="DNA-binding protein Fis"/>
    <property type="match status" value="1"/>
</dbReference>
<dbReference type="Gene3D" id="1.10.10.60">
    <property type="entry name" value="Homeodomain-like"/>
    <property type="match status" value="1"/>
</dbReference>
<dbReference type="HAMAP" id="MF_00166">
    <property type="entry name" value="DNA_binding_Fis"/>
    <property type="match status" value="1"/>
</dbReference>
<dbReference type="InterPro" id="IPR005412">
    <property type="entry name" value="Fis_DNA-bd"/>
</dbReference>
<dbReference type="InterPro" id="IPR009057">
    <property type="entry name" value="Homeodomain-like_sf"/>
</dbReference>
<dbReference type="InterPro" id="IPR002197">
    <property type="entry name" value="HTH_Fis"/>
</dbReference>
<dbReference type="InterPro" id="IPR050207">
    <property type="entry name" value="Trans_regulatory_Fis"/>
</dbReference>
<dbReference type="NCBIfam" id="NF001659">
    <property type="entry name" value="PRK00430.1"/>
    <property type="match status" value="1"/>
</dbReference>
<dbReference type="PANTHER" id="PTHR47918">
    <property type="entry name" value="DNA-BINDING PROTEIN FIS"/>
    <property type="match status" value="1"/>
</dbReference>
<dbReference type="PANTHER" id="PTHR47918:SF1">
    <property type="entry name" value="DNA-BINDING PROTEIN FIS"/>
    <property type="match status" value="1"/>
</dbReference>
<dbReference type="Pfam" id="PF02954">
    <property type="entry name" value="HTH_8"/>
    <property type="match status" value="1"/>
</dbReference>
<dbReference type="PIRSF" id="PIRSF002097">
    <property type="entry name" value="DNA-binding_Fis"/>
    <property type="match status" value="1"/>
</dbReference>
<dbReference type="PRINTS" id="PR01591">
    <property type="entry name" value="DNABINDNGFIS"/>
</dbReference>
<dbReference type="PRINTS" id="PR01590">
    <property type="entry name" value="HTHFIS"/>
</dbReference>
<dbReference type="SUPFAM" id="SSF46689">
    <property type="entry name" value="Homeodomain-like"/>
    <property type="match status" value="1"/>
</dbReference>
<organism>
    <name type="scientific">Escherichia coli O6:H1 (strain CFT073 / ATCC 700928 / UPEC)</name>
    <dbReference type="NCBI Taxonomy" id="199310"/>
    <lineage>
        <taxon>Bacteria</taxon>
        <taxon>Pseudomonadati</taxon>
        <taxon>Pseudomonadota</taxon>
        <taxon>Gammaproteobacteria</taxon>
        <taxon>Enterobacterales</taxon>
        <taxon>Enterobacteriaceae</taxon>
        <taxon>Escherichia</taxon>
    </lineage>
</organism>
<keyword id="KW-0010">Activator</keyword>
<keyword id="KW-0238">DNA-binding</keyword>
<keyword id="KW-1185">Reference proteome</keyword>
<keyword id="KW-0804">Transcription</keyword>
<keyword id="KW-0805">Transcription regulation</keyword>
<evidence type="ECO:0000255" key="1">
    <source>
        <dbReference type="HAMAP-Rule" id="MF_00166"/>
    </source>
</evidence>
<gene>
    <name evidence="1" type="primary">fis</name>
    <name type="ordered locus">c4027</name>
</gene>
<reference key="1">
    <citation type="journal article" date="2002" name="Proc. Natl. Acad. Sci. U.S.A.">
        <title>Extensive mosaic structure revealed by the complete genome sequence of uropathogenic Escherichia coli.</title>
        <authorList>
            <person name="Welch R.A."/>
            <person name="Burland V."/>
            <person name="Plunkett G. III"/>
            <person name="Redford P."/>
            <person name="Roesch P."/>
            <person name="Rasko D."/>
            <person name="Buckles E.L."/>
            <person name="Liou S.-R."/>
            <person name="Boutin A."/>
            <person name="Hackett J."/>
            <person name="Stroud D."/>
            <person name="Mayhew G.F."/>
            <person name="Rose D.J."/>
            <person name="Zhou S."/>
            <person name="Schwartz D.C."/>
            <person name="Perna N.T."/>
            <person name="Mobley H.L.T."/>
            <person name="Donnenberg M.S."/>
            <person name="Blattner F.R."/>
        </authorList>
    </citation>
    <scope>NUCLEOTIDE SEQUENCE [LARGE SCALE GENOMIC DNA]</scope>
    <source>
        <strain>CFT073 / ATCC 700928 / UPEC</strain>
    </source>
</reference>
<protein>
    <recommendedName>
        <fullName evidence="1">DNA-binding protein Fis</fullName>
    </recommendedName>
</protein>
<feature type="chain" id="PRO_0000203879" description="DNA-binding protein Fis">
    <location>
        <begin position="1"/>
        <end position="98"/>
    </location>
</feature>
<feature type="DNA-binding region" description="H-T-H motif" evidence="1">
    <location>
        <begin position="74"/>
        <end position="93"/>
    </location>
</feature>